<protein>
    <recommendedName>
        <fullName evidence="1">Phosphoglycerate kinase</fullName>
        <ecNumber evidence="1">2.7.2.3</ecNumber>
    </recommendedName>
</protein>
<reference key="1">
    <citation type="journal article" date="2009" name="J. Bacteriol.">
        <title>Genome sequences of three Agrobacterium biovars help elucidate the evolution of multichromosome genomes in bacteria.</title>
        <authorList>
            <person name="Slater S.C."/>
            <person name="Goldman B.S."/>
            <person name="Goodner B."/>
            <person name="Setubal J.C."/>
            <person name="Farrand S.K."/>
            <person name="Nester E.W."/>
            <person name="Burr T.J."/>
            <person name="Banta L."/>
            <person name="Dickerman A.W."/>
            <person name="Paulsen I."/>
            <person name="Otten L."/>
            <person name="Suen G."/>
            <person name="Welch R."/>
            <person name="Almeida N.F."/>
            <person name="Arnold F."/>
            <person name="Burton O.T."/>
            <person name="Du Z."/>
            <person name="Ewing A."/>
            <person name="Godsy E."/>
            <person name="Heisel S."/>
            <person name="Houmiel K.L."/>
            <person name="Jhaveri J."/>
            <person name="Lu J."/>
            <person name="Miller N.M."/>
            <person name="Norton S."/>
            <person name="Chen Q."/>
            <person name="Phoolcharoen W."/>
            <person name="Ohlin V."/>
            <person name="Ondrusek D."/>
            <person name="Pride N."/>
            <person name="Stricklin S.L."/>
            <person name="Sun J."/>
            <person name="Wheeler C."/>
            <person name="Wilson L."/>
            <person name="Zhu H."/>
            <person name="Wood D.W."/>
        </authorList>
    </citation>
    <scope>NUCLEOTIDE SEQUENCE [LARGE SCALE GENOMIC DNA]</scope>
    <source>
        <strain>ATCC BAA-846 / DSM 112012 / S4</strain>
    </source>
</reference>
<proteinExistence type="inferred from homology"/>
<feature type="chain" id="PRO_1000203317" description="Phosphoglycerate kinase">
    <location>
        <begin position="1"/>
        <end position="400"/>
    </location>
</feature>
<feature type="binding site" evidence="1">
    <location>
        <begin position="23"/>
        <end position="25"/>
    </location>
    <ligand>
        <name>substrate</name>
    </ligand>
</feature>
<feature type="binding site" evidence="1">
    <location>
        <position position="38"/>
    </location>
    <ligand>
        <name>substrate</name>
    </ligand>
</feature>
<feature type="binding site" evidence="1">
    <location>
        <begin position="61"/>
        <end position="64"/>
    </location>
    <ligand>
        <name>substrate</name>
    </ligand>
</feature>
<feature type="binding site" evidence="1">
    <location>
        <position position="120"/>
    </location>
    <ligand>
        <name>substrate</name>
    </ligand>
</feature>
<feature type="binding site" evidence="1">
    <location>
        <position position="153"/>
    </location>
    <ligand>
        <name>substrate</name>
    </ligand>
</feature>
<feature type="binding site" evidence="1">
    <location>
        <position position="203"/>
    </location>
    <ligand>
        <name>ATP</name>
        <dbReference type="ChEBI" id="CHEBI:30616"/>
    </ligand>
</feature>
<feature type="binding site" evidence="1">
    <location>
        <position position="325"/>
    </location>
    <ligand>
        <name>ATP</name>
        <dbReference type="ChEBI" id="CHEBI:30616"/>
    </ligand>
</feature>
<feature type="binding site" evidence="1">
    <location>
        <begin position="355"/>
        <end position="358"/>
    </location>
    <ligand>
        <name>ATP</name>
        <dbReference type="ChEBI" id="CHEBI:30616"/>
    </ligand>
</feature>
<comment type="catalytic activity">
    <reaction evidence="1">
        <text>(2R)-3-phosphoglycerate + ATP = (2R)-3-phospho-glyceroyl phosphate + ADP</text>
        <dbReference type="Rhea" id="RHEA:14801"/>
        <dbReference type="ChEBI" id="CHEBI:30616"/>
        <dbReference type="ChEBI" id="CHEBI:57604"/>
        <dbReference type="ChEBI" id="CHEBI:58272"/>
        <dbReference type="ChEBI" id="CHEBI:456216"/>
        <dbReference type="EC" id="2.7.2.3"/>
    </reaction>
</comment>
<comment type="pathway">
    <text evidence="1">Carbohydrate degradation; glycolysis; pyruvate from D-glyceraldehyde 3-phosphate: step 2/5.</text>
</comment>
<comment type="subunit">
    <text evidence="1">Monomer.</text>
</comment>
<comment type="subcellular location">
    <subcellularLocation>
        <location evidence="1">Cytoplasm</location>
    </subcellularLocation>
</comment>
<comment type="similarity">
    <text evidence="1">Belongs to the phosphoglycerate kinase family.</text>
</comment>
<dbReference type="EC" id="2.7.2.3" evidence="1"/>
<dbReference type="EMBL" id="CP000633">
    <property type="protein sequence ID" value="ACM37628.1"/>
    <property type="molecule type" value="Genomic_DNA"/>
</dbReference>
<dbReference type="RefSeq" id="WP_015917041.1">
    <property type="nucleotide sequence ID" value="NC_011989.1"/>
</dbReference>
<dbReference type="SMR" id="B9JS00"/>
<dbReference type="STRING" id="311402.Avi_3651"/>
<dbReference type="KEGG" id="avi:Avi_3651"/>
<dbReference type="eggNOG" id="COG0126">
    <property type="taxonomic scope" value="Bacteria"/>
</dbReference>
<dbReference type="HOGENOM" id="CLU_025427_0_2_5"/>
<dbReference type="UniPathway" id="UPA00109">
    <property type="reaction ID" value="UER00185"/>
</dbReference>
<dbReference type="Proteomes" id="UP000001596">
    <property type="component" value="Chromosome 1"/>
</dbReference>
<dbReference type="GO" id="GO:0005829">
    <property type="term" value="C:cytosol"/>
    <property type="evidence" value="ECO:0007669"/>
    <property type="project" value="TreeGrafter"/>
</dbReference>
<dbReference type="GO" id="GO:0043531">
    <property type="term" value="F:ADP binding"/>
    <property type="evidence" value="ECO:0007669"/>
    <property type="project" value="TreeGrafter"/>
</dbReference>
<dbReference type="GO" id="GO:0005524">
    <property type="term" value="F:ATP binding"/>
    <property type="evidence" value="ECO:0007669"/>
    <property type="project" value="UniProtKB-KW"/>
</dbReference>
<dbReference type="GO" id="GO:0004618">
    <property type="term" value="F:phosphoglycerate kinase activity"/>
    <property type="evidence" value="ECO:0007669"/>
    <property type="project" value="UniProtKB-UniRule"/>
</dbReference>
<dbReference type="GO" id="GO:0006094">
    <property type="term" value="P:gluconeogenesis"/>
    <property type="evidence" value="ECO:0007669"/>
    <property type="project" value="TreeGrafter"/>
</dbReference>
<dbReference type="GO" id="GO:0006096">
    <property type="term" value="P:glycolytic process"/>
    <property type="evidence" value="ECO:0007669"/>
    <property type="project" value="UniProtKB-UniRule"/>
</dbReference>
<dbReference type="FunFam" id="3.40.50.1260:FF:000006">
    <property type="entry name" value="Phosphoglycerate kinase"/>
    <property type="match status" value="1"/>
</dbReference>
<dbReference type="FunFam" id="3.40.50.1260:FF:000031">
    <property type="entry name" value="Phosphoglycerate kinase 1"/>
    <property type="match status" value="1"/>
</dbReference>
<dbReference type="Gene3D" id="3.40.50.1260">
    <property type="entry name" value="Phosphoglycerate kinase, N-terminal domain"/>
    <property type="match status" value="2"/>
</dbReference>
<dbReference type="HAMAP" id="MF_00145">
    <property type="entry name" value="Phosphoglyc_kinase"/>
    <property type="match status" value="1"/>
</dbReference>
<dbReference type="InterPro" id="IPR001576">
    <property type="entry name" value="Phosphoglycerate_kinase"/>
</dbReference>
<dbReference type="InterPro" id="IPR015911">
    <property type="entry name" value="Phosphoglycerate_kinase_CS"/>
</dbReference>
<dbReference type="InterPro" id="IPR015824">
    <property type="entry name" value="Phosphoglycerate_kinase_N"/>
</dbReference>
<dbReference type="InterPro" id="IPR036043">
    <property type="entry name" value="Phosphoglycerate_kinase_sf"/>
</dbReference>
<dbReference type="PANTHER" id="PTHR11406">
    <property type="entry name" value="PHOSPHOGLYCERATE KINASE"/>
    <property type="match status" value="1"/>
</dbReference>
<dbReference type="PANTHER" id="PTHR11406:SF23">
    <property type="entry name" value="PHOSPHOGLYCERATE KINASE 1, CHLOROPLASTIC-RELATED"/>
    <property type="match status" value="1"/>
</dbReference>
<dbReference type="Pfam" id="PF00162">
    <property type="entry name" value="PGK"/>
    <property type="match status" value="1"/>
</dbReference>
<dbReference type="PIRSF" id="PIRSF000724">
    <property type="entry name" value="Pgk"/>
    <property type="match status" value="1"/>
</dbReference>
<dbReference type="PRINTS" id="PR00477">
    <property type="entry name" value="PHGLYCKINASE"/>
</dbReference>
<dbReference type="SUPFAM" id="SSF53748">
    <property type="entry name" value="Phosphoglycerate kinase"/>
    <property type="match status" value="1"/>
</dbReference>
<dbReference type="PROSITE" id="PS00111">
    <property type="entry name" value="PGLYCERATE_KINASE"/>
    <property type="match status" value="1"/>
</dbReference>
<evidence type="ECO:0000255" key="1">
    <source>
        <dbReference type="HAMAP-Rule" id="MF_00145"/>
    </source>
</evidence>
<sequence>MPAFKTLDDLTDIAGKRVLLRVDLNVPVSGGKVTDATRIERVAPTIKELSAKGAKVILLAHFGRPKGEPVADMSLSQIISAVEEVLDQAVAFGEDCVGEPAERAVAALNNGDILLLENTRFHKGEEKNDADFTAELAKNGDIYVNDAFSAAHRAHASTEGLAHILPAYAGRTMQAELEALEKGLGKPTHPVVAIVGGAKVSSKIDLLMNLVKKVDALVIGGGMANTFIAAQGIDVGKSLCEHDLAATAKQIMIEAETAGCTIVLPVDGVVAREFKANAANETVSVSAIPADAMMLDVGPKSVAVVNDWITKAATLVWNGPLGAFEIPPFDTATVSAAKHAAERSKAGKLVSVAGGGDTVSALNHAGVVDDFSYVSTAGGAFLEWMEGKELPGVAVLTRPA</sequence>
<keyword id="KW-0067">ATP-binding</keyword>
<keyword id="KW-0963">Cytoplasm</keyword>
<keyword id="KW-0324">Glycolysis</keyword>
<keyword id="KW-0418">Kinase</keyword>
<keyword id="KW-0547">Nucleotide-binding</keyword>
<keyword id="KW-1185">Reference proteome</keyword>
<keyword id="KW-0808">Transferase</keyword>
<gene>
    <name evidence="1" type="primary">pgk</name>
    <name type="ordered locus">Avi_3651</name>
</gene>
<name>PGK_ALLAM</name>
<organism>
    <name type="scientific">Allorhizobium ampelinum (strain ATCC BAA-846 / DSM 112012 / S4)</name>
    <name type="common">Agrobacterium vitis (strain S4)</name>
    <dbReference type="NCBI Taxonomy" id="311402"/>
    <lineage>
        <taxon>Bacteria</taxon>
        <taxon>Pseudomonadati</taxon>
        <taxon>Pseudomonadota</taxon>
        <taxon>Alphaproteobacteria</taxon>
        <taxon>Hyphomicrobiales</taxon>
        <taxon>Rhizobiaceae</taxon>
        <taxon>Rhizobium/Agrobacterium group</taxon>
        <taxon>Allorhizobium</taxon>
        <taxon>Allorhizobium ampelinum</taxon>
    </lineage>
</organism>
<accession>B9JS00</accession>